<feature type="chain" id="PRO_0000316537" description="Fibronectin type III and SPRY domain-containing protein 1">
    <location>
        <begin position="1"/>
        <end position="496"/>
    </location>
</feature>
<feature type="domain" description="COS" evidence="5">
    <location>
        <begin position="105"/>
        <end position="162"/>
    </location>
</feature>
<feature type="domain" description="Fibronectin type-III" evidence="3">
    <location>
        <begin position="164"/>
        <end position="268"/>
    </location>
</feature>
<feature type="domain" description="B30.2/SPRY" evidence="4">
    <location>
        <begin position="268"/>
        <end position="477"/>
    </location>
</feature>
<feature type="region of interest" description="Disordered" evidence="6">
    <location>
        <begin position="301"/>
        <end position="336"/>
    </location>
</feature>
<feature type="coiled-coil region" evidence="2">
    <location>
        <begin position="4"/>
        <end position="99"/>
    </location>
</feature>
<feature type="modified residue" description="Omega-N-methylarginine" evidence="1">
    <location>
        <position position="310"/>
    </location>
</feature>
<feature type="modified residue" description="Omega-N-methylarginine" evidence="11">
    <location>
        <position position="320"/>
    </location>
</feature>
<feature type="sequence variant" id="VAR_038385" description="In dbSNP:rs35139245." evidence="7">
    <original>L</original>
    <variation>V</variation>
    <location>
        <position position="232"/>
    </location>
</feature>
<feature type="mutagenesis site" description="In mitosis, remained associated with microtubules; when associated with A-317; A-322 and A-324." evidence="8">
    <original>S</original>
    <variation>A</variation>
    <location>
        <position position="313"/>
    </location>
</feature>
<feature type="mutagenesis site" description="Reduced ability to associate with microtubules; when associated with D-317; E-322 and D-324." evidence="8">
    <original>S</original>
    <variation>D</variation>
    <location>
        <position position="313"/>
    </location>
</feature>
<feature type="mutagenesis site" description="In mitosis, remained associated with microtubules; when associated with A-313; A-322 and A-324." evidence="8">
    <original>S</original>
    <variation>A</variation>
    <location>
        <position position="317"/>
    </location>
</feature>
<feature type="mutagenesis site" description="Reduced ability to associate with microtubules; when associated with D-313; E-322 and D-324." evidence="8">
    <original>S</original>
    <variation>D</variation>
    <location>
        <position position="317"/>
    </location>
</feature>
<feature type="mutagenesis site" description="In mitosis, remained associated with microtubules; when associated with A-313; A-317 and A-324." evidence="8">
    <original>T</original>
    <variation>A</variation>
    <location>
        <position position="322"/>
    </location>
</feature>
<feature type="mutagenesis site" description="Reduced ability to associate with microtubules; when associated with D-313; D-317 and D-324." evidence="8">
    <original>T</original>
    <variation>E</variation>
    <location>
        <position position="322"/>
    </location>
</feature>
<feature type="mutagenesis site" description="In mitosis, remained associated with microtubules; when associated with A-313; A-317 and A-322." evidence="8">
    <original>S</original>
    <variation>A</variation>
    <location>
        <position position="324"/>
    </location>
</feature>
<feature type="mutagenesis site" description="Reduced ability to associate with microtubules; when associated with D-313; D-317 and E-322." evidence="8">
    <original>S</original>
    <variation>D</variation>
    <location>
        <position position="324"/>
    </location>
</feature>
<feature type="sequence conflict" description="In Ref. 3; BAB13885." evidence="10" ref="3">
    <original>G</original>
    <variation>R</variation>
    <location>
        <position position="295"/>
    </location>
</feature>
<organism>
    <name type="scientific">Homo sapiens</name>
    <name type="common">Human</name>
    <dbReference type="NCBI Taxonomy" id="9606"/>
    <lineage>
        <taxon>Eukaryota</taxon>
        <taxon>Metazoa</taxon>
        <taxon>Chordata</taxon>
        <taxon>Craniata</taxon>
        <taxon>Vertebrata</taxon>
        <taxon>Euteleostomi</taxon>
        <taxon>Mammalia</taxon>
        <taxon>Eutheria</taxon>
        <taxon>Euarchontoglires</taxon>
        <taxon>Primates</taxon>
        <taxon>Haplorrhini</taxon>
        <taxon>Catarrhini</taxon>
        <taxon>Hominidae</taxon>
        <taxon>Homo</taxon>
    </lineage>
</organism>
<keyword id="KW-0131">Cell cycle</keyword>
<keyword id="KW-0132">Cell division</keyword>
<keyword id="KW-0175">Coiled coil</keyword>
<keyword id="KW-0963">Cytoplasm</keyword>
<keyword id="KW-0206">Cytoskeleton</keyword>
<keyword id="KW-0488">Methylation</keyword>
<keyword id="KW-0493">Microtubule</keyword>
<keyword id="KW-0498">Mitosis</keyword>
<keyword id="KW-0539">Nucleus</keyword>
<keyword id="KW-1267">Proteomics identification</keyword>
<keyword id="KW-1185">Reference proteome</keyword>
<accession>Q9BTV5</accession>
<accession>B2RDT0</accession>
<accession>Q9BXN0</accession>
<accession>Q9HAG4</accession>
<reference key="1">
    <citation type="journal article" date="2001" name="Biochim. Biophys. Acta">
        <title>Characterization of human FSD1, a novel brain specific gene on chromosome 19 with paralogy to 9q31.</title>
        <authorList>
            <person name="Carim-Todd L."/>
            <person name="Escarceller M."/>
            <person name="Estivill X."/>
            <person name="Sumoy L."/>
        </authorList>
    </citation>
    <scope>NUCLEOTIDE SEQUENCE [MRNA]</scope>
    <scope>TISSUE SPECIFICITY</scope>
    <scope>VARIANT VAL-232</scope>
</reference>
<reference key="2">
    <citation type="journal article" date="2002" name="Curr. Biol.">
        <title>Identification of a novel microtubule-associated protein that regulates microtubule organization and cytokinesis by using a GFP-screening strategy.</title>
        <authorList>
            <person name="Manabe R."/>
            <person name="Whitmore L."/>
            <person name="Weiss J.M."/>
            <person name="Horwitz A.R."/>
        </authorList>
    </citation>
    <scope>NUCLEOTIDE SEQUENCE [MRNA]</scope>
    <scope>FUNCTION</scope>
    <scope>SUBCELLULAR LOCATION</scope>
    <source>
        <tissue>Fibrosarcoma</tissue>
    </source>
</reference>
<reference key="3">
    <citation type="journal article" date="2004" name="Nat. Genet.">
        <title>Complete sequencing and characterization of 21,243 full-length human cDNAs.</title>
        <authorList>
            <person name="Ota T."/>
            <person name="Suzuki Y."/>
            <person name="Nishikawa T."/>
            <person name="Otsuki T."/>
            <person name="Sugiyama T."/>
            <person name="Irie R."/>
            <person name="Wakamatsu A."/>
            <person name="Hayashi K."/>
            <person name="Sato H."/>
            <person name="Nagai K."/>
            <person name="Kimura K."/>
            <person name="Makita H."/>
            <person name="Sekine M."/>
            <person name="Obayashi M."/>
            <person name="Nishi T."/>
            <person name="Shibahara T."/>
            <person name="Tanaka T."/>
            <person name="Ishii S."/>
            <person name="Yamamoto J."/>
            <person name="Saito K."/>
            <person name="Kawai Y."/>
            <person name="Isono Y."/>
            <person name="Nakamura Y."/>
            <person name="Nagahari K."/>
            <person name="Murakami K."/>
            <person name="Yasuda T."/>
            <person name="Iwayanagi T."/>
            <person name="Wagatsuma M."/>
            <person name="Shiratori A."/>
            <person name="Sudo H."/>
            <person name="Hosoiri T."/>
            <person name="Kaku Y."/>
            <person name="Kodaira H."/>
            <person name="Kondo H."/>
            <person name="Sugawara M."/>
            <person name="Takahashi M."/>
            <person name="Kanda K."/>
            <person name="Yokoi T."/>
            <person name="Furuya T."/>
            <person name="Kikkawa E."/>
            <person name="Omura Y."/>
            <person name="Abe K."/>
            <person name="Kamihara K."/>
            <person name="Katsuta N."/>
            <person name="Sato K."/>
            <person name="Tanikawa M."/>
            <person name="Yamazaki M."/>
            <person name="Ninomiya K."/>
            <person name="Ishibashi T."/>
            <person name="Yamashita H."/>
            <person name="Murakawa K."/>
            <person name="Fujimori K."/>
            <person name="Tanai H."/>
            <person name="Kimata M."/>
            <person name="Watanabe M."/>
            <person name="Hiraoka S."/>
            <person name="Chiba Y."/>
            <person name="Ishida S."/>
            <person name="Ono Y."/>
            <person name="Takiguchi S."/>
            <person name="Watanabe S."/>
            <person name="Yosida M."/>
            <person name="Hotuta T."/>
            <person name="Kusano J."/>
            <person name="Kanehori K."/>
            <person name="Takahashi-Fujii A."/>
            <person name="Hara H."/>
            <person name="Tanase T.-O."/>
            <person name="Nomura Y."/>
            <person name="Togiya S."/>
            <person name="Komai F."/>
            <person name="Hara R."/>
            <person name="Takeuchi K."/>
            <person name="Arita M."/>
            <person name="Imose N."/>
            <person name="Musashino K."/>
            <person name="Yuuki H."/>
            <person name="Oshima A."/>
            <person name="Sasaki N."/>
            <person name="Aotsuka S."/>
            <person name="Yoshikawa Y."/>
            <person name="Matsunawa H."/>
            <person name="Ichihara T."/>
            <person name="Shiohata N."/>
            <person name="Sano S."/>
            <person name="Moriya S."/>
            <person name="Momiyama H."/>
            <person name="Satoh N."/>
            <person name="Takami S."/>
            <person name="Terashima Y."/>
            <person name="Suzuki O."/>
            <person name="Nakagawa S."/>
            <person name="Senoh A."/>
            <person name="Mizoguchi H."/>
            <person name="Goto Y."/>
            <person name="Shimizu F."/>
            <person name="Wakebe H."/>
            <person name="Hishigaki H."/>
            <person name="Watanabe T."/>
            <person name="Sugiyama A."/>
            <person name="Takemoto M."/>
            <person name="Kawakami B."/>
            <person name="Yamazaki M."/>
            <person name="Watanabe K."/>
            <person name="Kumagai A."/>
            <person name="Itakura S."/>
            <person name="Fukuzumi Y."/>
            <person name="Fujimori Y."/>
            <person name="Komiyama M."/>
            <person name="Tashiro H."/>
            <person name="Tanigami A."/>
            <person name="Fujiwara T."/>
            <person name="Ono T."/>
            <person name="Yamada K."/>
            <person name="Fujii Y."/>
            <person name="Ozaki K."/>
            <person name="Hirao M."/>
            <person name="Ohmori Y."/>
            <person name="Kawabata A."/>
            <person name="Hikiji T."/>
            <person name="Kobatake N."/>
            <person name="Inagaki H."/>
            <person name="Ikema Y."/>
            <person name="Okamoto S."/>
            <person name="Okitani R."/>
            <person name="Kawakami T."/>
            <person name="Noguchi S."/>
            <person name="Itoh T."/>
            <person name="Shigeta K."/>
            <person name="Senba T."/>
            <person name="Matsumura K."/>
            <person name="Nakajima Y."/>
            <person name="Mizuno T."/>
            <person name="Morinaga M."/>
            <person name="Sasaki M."/>
            <person name="Togashi T."/>
            <person name="Oyama M."/>
            <person name="Hata H."/>
            <person name="Watanabe M."/>
            <person name="Komatsu T."/>
            <person name="Mizushima-Sugano J."/>
            <person name="Satoh T."/>
            <person name="Shirai Y."/>
            <person name="Takahashi Y."/>
            <person name="Nakagawa K."/>
            <person name="Okumura K."/>
            <person name="Nagase T."/>
            <person name="Nomura N."/>
            <person name="Kikuchi H."/>
            <person name="Masuho Y."/>
            <person name="Yamashita R."/>
            <person name="Nakai K."/>
            <person name="Yada T."/>
            <person name="Nakamura Y."/>
            <person name="Ohara O."/>
            <person name="Isogai T."/>
            <person name="Sugano S."/>
        </authorList>
    </citation>
    <scope>NUCLEOTIDE SEQUENCE [LARGE SCALE MRNA]</scope>
    <source>
        <tissue>Embryo</tissue>
        <tissue>Testis</tissue>
    </source>
</reference>
<reference key="4">
    <citation type="journal article" date="2004" name="Genome Res.">
        <title>The status, quality, and expansion of the NIH full-length cDNA project: the Mammalian Gene Collection (MGC).</title>
        <authorList>
            <consortium name="The MGC Project Team"/>
        </authorList>
    </citation>
    <scope>NUCLEOTIDE SEQUENCE [LARGE SCALE MRNA]</scope>
    <source>
        <tissue>Brain</tissue>
    </source>
</reference>
<reference key="5">
    <citation type="journal article" date="2002" name="J. Cell Sci.">
        <title>A novel centrosome-associated protein with affinity for microtubules.</title>
        <authorList>
            <person name="Stein P.A."/>
            <person name="Toret C.P."/>
            <person name="Salic A.N."/>
            <person name="Rolls M.M."/>
            <person name="Rapoport T.A."/>
        </authorList>
    </citation>
    <scope>FUNCTION</scope>
    <scope>SUBCELLULAR LOCATION</scope>
    <scope>TISSUE SPECIFICITY</scope>
    <scope>MUTAGENESIS OF SER-313; SER-317; THR-322 AND SER-324</scope>
</reference>
<reference key="6">
    <citation type="journal article" date="2011" name="BMC Syst. Biol.">
        <title>Initial characterization of the human central proteome.</title>
        <authorList>
            <person name="Burkard T.R."/>
            <person name="Planyavsky M."/>
            <person name="Kaupe I."/>
            <person name="Breitwieser F.P."/>
            <person name="Buerckstuemmer T."/>
            <person name="Bennett K.L."/>
            <person name="Superti-Furga G."/>
            <person name="Colinge J."/>
        </authorList>
    </citation>
    <scope>IDENTIFICATION BY MASS SPECTROMETRY [LARGE SCALE ANALYSIS]</scope>
</reference>
<reference key="7">
    <citation type="journal article" date="2014" name="Mol. Cell. Proteomics">
        <title>Immunoaffinity enrichment and mass spectrometry analysis of protein methylation.</title>
        <authorList>
            <person name="Guo A."/>
            <person name="Gu H."/>
            <person name="Zhou J."/>
            <person name="Mulhern D."/>
            <person name="Wang Y."/>
            <person name="Lee K.A."/>
            <person name="Yang V."/>
            <person name="Aguiar M."/>
            <person name="Kornhauser J."/>
            <person name="Jia X."/>
            <person name="Ren J."/>
            <person name="Beausoleil S.A."/>
            <person name="Silva J.C."/>
            <person name="Vemulapalli V."/>
            <person name="Bedford M.T."/>
            <person name="Comb M.J."/>
        </authorList>
    </citation>
    <scope>METHYLATION [LARGE SCALE ANALYSIS] AT ARG-320</scope>
    <scope>IDENTIFICATION BY MASS SPECTROMETRY [LARGE SCALE ANALYSIS]</scope>
    <source>
        <tissue>Colon carcinoma</tissue>
    </source>
</reference>
<gene>
    <name type="primary">FSD1</name>
    <name type="synonym">GLFND</name>
    <name type="synonym">MIR1</name>
    <name type="ORF">VLP27</name>
</gene>
<name>FSD1_HUMAN</name>
<sequence>MEEQREALRKIIKTLAVKNEEIQSFIYSLKQMLLNVEANSAKVQEDLEAEFQSLFSLLEELKEGMLMKIKQDRASRTYELQNQLAACTRALESSEELLETANQTLQAMDSEDFPQAAKQIKDGVTMAPAFRLSLKAKVSDNMSHLMVDFAQERQMLQALKFLPVPSAPVIDLAESLVADNCVTLVWRMPDEDSKIDHYVLEYRRTNFEGPPRLKEDQPWMVIEGIRQTEYTLTGLKFDMKYMNFRVKACNKAVAGEFSEPVTLETPAFMFRLDASTSHQNLRVDDLSVEWDAMGGKVQDIKAREKDGKGRTASPINSPARGTPSPKRMPSGRGGRDRFTAESYTVLGDTLIDGGEHYWEVRYEPDSKAFGVGVAYRSLGRFEQLGKTAASWCLHVNNWLQVSFTAKHANKVKVLDAPVPDCLGVHCDFHQGLLSFYNARTKQVLHTFKTRFTQPLLPAFTVWCGSFQVTTGLQVPSAVRCLQKRGSATSSSNTSLT</sequence>
<dbReference type="EMBL" id="AF316829">
    <property type="protein sequence ID" value="AAK26747.1"/>
    <property type="molecule type" value="mRNA"/>
</dbReference>
<dbReference type="EMBL" id="AY032617">
    <property type="protein sequence ID" value="AAK51145.1"/>
    <property type="molecule type" value="mRNA"/>
</dbReference>
<dbReference type="EMBL" id="AK021750">
    <property type="protein sequence ID" value="BAB13885.1"/>
    <property type="molecule type" value="mRNA"/>
</dbReference>
<dbReference type="EMBL" id="AK315661">
    <property type="protein sequence ID" value="BAG38027.1"/>
    <property type="molecule type" value="mRNA"/>
</dbReference>
<dbReference type="EMBL" id="BC003124">
    <property type="protein sequence ID" value="AAH03124.1"/>
    <property type="molecule type" value="mRNA"/>
</dbReference>
<dbReference type="CCDS" id="CCDS12127.1"/>
<dbReference type="RefSeq" id="NP_077309.1">
    <property type="nucleotide sequence ID" value="NM_024333.3"/>
</dbReference>
<dbReference type="BioGRID" id="122600">
    <property type="interactions" value="72"/>
</dbReference>
<dbReference type="FunCoup" id="Q9BTV5">
    <property type="interactions" value="228"/>
</dbReference>
<dbReference type="IntAct" id="Q9BTV5">
    <property type="interactions" value="59"/>
</dbReference>
<dbReference type="STRING" id="9606.ENSP00000221856"/>
<dbReference type="GlyGen" id="Q9BTV5">
    <property type="glycosylation" value="1 site"/>
</dbReference>
<dbReference type="iPTMnet" id="Q9BTV5"/>
<dbReference type="MetOSite" id="Q9BTV5"/>
<dbReference type="PhosphoSitePlus" id="Q9BTV5"/>
<dbReference type="BioMuta" id="FSD1"/>
<dbReference type="DMDM" id="74733152"/>
<dbReference type="jPOST" id="Q9BTV5"/>
<dbReference type="MassIVE" id="Q9BTV5"/>
<dbReference type="PaxDb" id="9606-ENSP00000221856"/>
<dbReference type="PeptideAtlas" id="Q9BTV5"/>
<dbReference type="ProteomicsDB" id="79013"/>
<dbReference type="Pumba" id="Q9BTV5"/>
<dbReference type="Antibodypedia" id="23560">
    <property type="antibodies" value="192 antibodies from 24 providers"/>
</dbReference>
<dbReference type="DNASU" id="79187"/>
<dbReference type="Ensembl" id="ENST00000221856.11">
    <property type="protein sequence ID" value="ENSP00000221856.5"/>
    <property type="gene ID" value="ENSG00000105255.11"/>
</dbReference>
<dbReference type="GeneID" id="79187"/>
<dbReference type="KEGG" id="hsa:79187"/>
<dbReference type="MANE-Select" id="ENST00000221856.11">
    <property type="protein sequence ID" value="ENSP00000221856.5"/>
    <property type="RefSeq nucleotide sequence ID" value="NM_024333.3"/>
    <property type="RefSeq protein sequence ID" value="NP_077309.1"/>
</dbReference>
<dbReference type="UCSC" id="uc002lzy.3">
    <property type="organism name" value="human"/>
</dbReference>
<dbReference type="AGR" id="HGNC:13745"/>
<dbReference type="CTD" id="79187"/>
<dbReference type="DisGeNET" id="79187"/>
<dbReference type="GeneCards" id="FSD1"/>
<dbReference type="HGNC" id="HGNC:13745">
    <property type="gene designation" value="FSD1"/>
</dbReference>
<dbReference type="HPA" id="ENSG00000105255">
    <property type="expression patterns" value="Tissue enriched (brain)"/>
</dbReference>
<dbReference type="MIM" id="609828">
    <property type="type" value="gene"/>
</dbReference>
<dbReference type="neXtProt" id="NX_Q9BTV5"/>
<dbReference type="OpenTargets" id="ENSG00000105255"/>
<dbReference type="PharmGKB" id="PA134882882"/>
<dbReference type="VEuPathDB" id="HostDB:ENSG00000105255"/>
<dbReference type="eggNOG" id="KOG2177">
    <property type="taxonomic scope" value="Eukaryota"/>
</dbReference>
<dbReference type="GeneTree" id="ENSGT00940000159440"/>
<dbReference type="HOGENOM" id="CLU_013137_19_1_1"/>
<dbReference type="InParanoid" id="Q9BTV5"/>
<dbReference type="OMA" id="PARCAQS"/>
<dbReference type="OrthoDB" id="9927450at2759"/>
<dbReference type="PAN-GO" id="Q9BTV5">
    <property type="GO annotations" value="4 GO annotations based on evolutionary models"/>
</dbReference>
<dbReference type="PhylomeDB" id="Q9BTV5"/>
<dbReference type="TreeFam" id="TF333654"/>
<dbReference type="PathwayCommons" id="Q9BTV5"/>
<dbReference type="SignaLink" id="Q9BTV5"/>
<dbReference type="BioGRID-ORCS" id="79187">
    <property type="hits" value="21 hits in 1157 CRISPR screens"/>
</dbReference>
<dbReference type="CD-CODE" id="8C2F96ED">
    <property type="entry name" value="Centrosome"/>
</dbReference>
<dbReference type="CD-CODE" id="FB4E32DD">
    <property type="entry name" value="Presynaptic clusters and postsynaptic densities"/>
</dbReference>
<dbReference type="ChiTaRS" id="FSD1">
    <property type="organism name" value="human"/>
</dbReference>
<dbReference type="GenomeRNAi" id="79187"/>
<dbReference type="Pharos" id="Q9BTV5">
    <property type="development level" value="Tbio"/>
</dbReference>
<dbReference type="PRO" id="PR:Q9BTV5"/>
<dbReference type="Proteomes" id="UP000005640">
    <property type="component" value="Chromosome 19"/>
</dbReference>
<dbReference type="RNAct" id="Q9BTV5">
    <property type="molecule type" value="protein"/>
</dbReference>
<dbReference type="Bgee" id="ENSG00000105255">
    <property type="expression patterns" value="Expressed in right frontal lobe and 129 other cell types or tissues"/>
</dbReference>
<dbReference type="ExpressionAtlas" id="Q9BTV5">
    <property type="expression patterns" value="baseline and differential"/>
</dbReference>
<dbReference type="GO" id="GO:0005813">
    <property type="term" value="C:centrosome"/>
    <property type="evidence" value="ECO:0000315"/>
    <property type="project" value="UniProtKB"/>
</dbReference>
<dbReference type="GO" id="GO:0032154">
    <property type="term" value="C:cleavage furrow"/>
    <property type="evidence" value="ECO:0007669"/>
    <property type="project" value="UniProtKB-SubCell"/>
</dbReference>
<dbReference type="GO" id="GO:0005829">
    <property type="term" value="C:cytosol"/>
    <property type="evidence" value="ECO:0000314"/>
    <property type="project" value="HPA"/>
</dbReference>
<dbReference type="GO" id="GO:0005874">
    <property type="term" value="C:microtubule"/>
    <property type="evidence" value="ECO:0000315"/>
    <property type="project" value="UniProtKB"/>
</dbReference>
<dbReference type="GO" id="GO:0005634">
    <property type="term" value="C:nucleus"/>
    <property type="evidence" value="ECO:0007669"/>
    <property type="project" value="UniProtKB-SubCell"/>
</dbReference>
<dbReference type="GO" id="GO:0042802">
    <property type="term" value="F:identical protein binding"/>
    <property type="evidence" value="ECO:0000353"/>
    <property type="project" value="UniProtKB"/>
</dbReference>
<dbReference type="GO" id="GO:0008017">
    <property type="term" value="F:microtubule binding"/>
    <property type="evidence" value="ECO:0000315"/>
    <property type="project" value="UniProtKB"/>
</dbReference>
<dbReference type="GO" id="GO:0051301">
    <property type="term" value="P:cell division"/>
    <property type="evidence" value="ECO:0007669"/>
    <property type="project" value="UniProtKB-KW"/>
</dbReference>
<dbReference type="GO" id="GO:0031122">
    <property type="term" value="P:cytoplasmic microtubule organization"/>
    <property type="evidence" value="ECO:0000315"/>
    <property type="project" value="UniProtKB"/>
</dbReference>
<dbReference type="GO" id="GO:0051302">
    <property type="term" value="P:regulation of cell division"/>
    <property type="evidence" value="ECO:0000314"/>
    <property type="project" value="UniProtKB"/>
</dbReference>
<dbReference type="GO" id="GO:0032465">
    <property type="term" value="P:regulation of cytokinesis"/>
    <property type="evidence" value="ECO:0000314"/>
    <property type="project" value="UniProtKB"/>
</dbReference>
<dbReference type="GO" id="GO:0060236">
    <property type="term" value="P:regulation of mitotic spindle organization"/>
    <property type="evidence" value="ECO:0000314"/>
    <property type="project" value="UniProtKB"/>
</dbReference>
<dbReference type="CDD" id="cd00063">
    <property type="entry name" value="FN3"/>
    <property type="match status" value="1"/>
</dbReference>
<dbReference type="CDD" id="cd12901">
    <property type="entry name" value="SPRY_PRY_FSD1"/>
    <property type="match status" value="1"/>
</dbReference>
<dbReference type="FunFam" id="2.60.120.920:FF:000034">
    <property type="entry name" value="Fibronectin type III and SPRY domain-containing protein 1"/>
    <property type="match status" value="1"/>
</dbReference>
<dbReference type="FunFam" id="1.20.5.170:FF:000064">
    <property type="entry name" value="fibronectin type III and SPRY domain-containing protein 1"/>
    <property type="match status" value="1"/>
</dbReference>
<dbReference type="FunFam" id="2.60.40.10:FF:000566">
    <property type="entry name" value="fibronectin type III and SPRY domain-containing protein 1"/>
    <property type="match status" value="1"/>
</dbReference>
<dbReference type="Gene3D" id="1.20.5.170">
    <property type="match status" value="1"/>
</dbReference>
<dbReference type="Gene3D" id="2.60.120.920">
    <property type="match status" value="1"/>
</dbReference>
<dbReference type="Gene3D" id="2.60.40.10">
    <property type="entry name" value="Immunoglobulins"/>
    <property type="match status" value="1"/>
</dbReference>
<dbReference type="InterPro" id="IPR001870">
    <property type="entry name" value="B30.2/SPRY"/>
</dbReference>
<dbReference type="InterPro" id="IPR043136">
    <property type="entry name" value="B30.2/SPRY_sf"/>
</dbReference>
<dbReference type="InterPro" id="IPR003649">
    <property type="entry name" value="Bbox_C"/>
</dbReference>
<dbReference type="InterPro" id="IPR013320">
    <property type="entry name" value="ConA-like_dom_sf"/>
</dbReference>
<dbReference type="InterPro" id="IPR017903">
    <property type="entry name" value="COS_domain"/>
</dbReference>
<dbReference type="InterPro" id="IPR050617">
    <property type="entry name" value="E3_ligase_FN3/SPRY"/>
</dbReference>
<dbReference type="InterPro" id="IPR003961">
    <property type="entry name" value="FN3_dom"/>
</dbReference>
<dbReference type="InterPro" id="IPR036116">
    <property type="entry name" value="FN3_sf"/>
</dbReference>
<dbReference type="InterPro" id="IPR013783">
    <property type="entry name" value="Ig-like_fold"/>
</dbReference>
<dbReference type="InterPro" id="IPR035742">
    <property type="entry name" value="SPRY/PRY_FSD1"/>
</dbReference>
<dbReference type="InterPro" id="IPR003877">
    <property type="entry name" value="SPRY_dom"/>
</dbReference>
<dbReference type="PANTHER" id="PTHR24099">
    <property type="entry name" value="E3 UBIQUITIN-PROTEIN LIGASE TRIM36-RELATED"/>
    <property type="match status" value="1"/>
</dbReference>
<dbReference type="PANTHER" id="PTHR24099:SF4">
    <property type="entry name" value="FIBRONECTIN TYPE III AND SPRY DOMAIN-CONTAINING PROTEIN 1"/>
    <property type="match status" value="1"/>
</dbReference>
<dbReference type="Pfam" id="PF00041">
    <property type="entry name" value="fn3"/>
    <property type="match status" value="1"/>
</dbReference>
<dbReference type="Pfam" id="PF00622">
    <property type="entry name" value="SPRY"/>
    <property type="match status" value="1"/>
</dbReference>
<dbReference type="SMART" id="SM00502">
    <property type="entry name" value="BBC"/>
    <property type="match status" value="1"/>
</dbReference>
<dbReference type="SMART" id="SM00060">
    <property type="entry name" value="FN3"/>
    <property type="match status" value="1"/>
</dbReference>
<dbReference type="SMART" id="SM00449">
    <property type="entry name" value="SPRY"/>
    <property type="match status" value="1"/>
</dbReference>
<dbReference type="SUPFAM" id="SSF49899">
    <property type="entry name" value="Concanavalin A-like lectins/glucanases"/>
    <property type="match status" value="1"/>
</dbReference>
<dbReference type="SUPFAM" id="SSF49265">
    <property type="entry name" value="Fibronectin type III"/>
    <property type="match status" value="1"/>
</dbReference>
<dbReference type="PROSITE" id="PS50188">
    <property type="entry name" value="B302_SPRY"/>
    <property type="match status" value="1"/>
</dbReference>
<dbReference type="PROSITE" id="PS51262">
    <property type="entry name" value="COS"/>
    <property type="match status" value="1"/>
</dbReference>
<dbReference type="PROSITE" id="PS50853">
    <property type="entry name" value="FN3"/>
    <property type="match status" value="1"/>
</dbReference>
<proteinExistence type="evidence at protein level"/>
<comment type="function">
    <text evidence="8 9">May be involved in microtubule organization and stabilization.</text>
</comment>
<comment type="subunit">
    <text>Oligomerization is required for binding to microtubules.</text>
</comment>
<comment type="subcellular location">
    <subcellularLocation>
        <location>Cytoplasm</location>
        <location>Cytoskeleton</location>
        <location>Microtubule organizing center</location>
        <location>Centrosome</location>
    </subcellularLocation>
    <subcellularLocation>
        <location>Nucleus</location>
    </subcellularLocation>
    <subcellularLocation>
        <location>Cytoplasm</location>
    </subcellularLocation>
    <subcellularLocation>
        <location>Cleavage furrow</location>
    </subcellularLocation>
    <text>Cell-cycle-dependent association with the centrosome. Colocalizes with a subpopulation of microtubules. Does not associate with microtubules during mitosis but reassociates with microtubules during cytokinesis. Localizes to the central portions of a small subset of microtubules in interphase cells and a subpopulation of microtubules in the cleavage furrow, not present in the mitotic spindle.</text>
</comment>
<comment type="tissue specificity">
    <text evidence="7 8">Highly expressed in brain tissues, including cerebellum, cerebral cortex, medulla, occipital pole, frontal lobe, temporal lobe and putamen. Lower expression in spinal cord.</text>
</comment>
<comment type="domain">
    <text>B30.2 box contains a microtubule-binding site.</text>
</comment>
<evidence type="ECO:0000250" key="1">
    <source>
        <dbReference type="UniProtKB" id="Q7TPM6"/>
    </source>
</evidence>
<evidence type="ECO:0000255" key="2"/>
<evidence type="ECO:0000255" key="3">
    <source>
        <dbReference type="PROSITE-ProRule" id="PRU00316"/>
    </source>
</evidence>
<evidence type="ECO:0000255" key="4">
    <source>
        <dbReference type="PROSITE-ProRule" id="PRU00548"/>
    </source>
</evidence>
<evidence type="ECO:0000255" key="5">
    <source>
        <dbReference type="PROSITE-ProRule" id="PRU00586"/>
    </source>
</evidence>
<evidence type="ECO:0000256" key="6">
    <source>
        <dbReference type="SAM" id="MobiDB-lite"/>
    </source>
</evidence>
<evidence type="ECO:0000269" key="7">
    <source>
    </source>
</evidence>
<evidence type="ECO:0000269" key="8">
    <source>
    </source>
</evidence>
<evidence type="ECO:0000269" key="9">
    <source>
    </source>
</evidence>
<evidence type="ECO:0000305" key="10"/>
<evidence type="ECO:0007744" key="11">
    <source>
    </source>
</evidence>
<protein>
    <recommendedName>
        <fullName>Fibronectin type III and SPRY domain-containing protein 1</fullName>
    </recommendedName>
    <alternativeName>
        <fullName>MID1-related protein 1</fullName>
    </alternativeName>
    <alternativeName>
        <fullName>Microtubule-associated protein GLFND</fullName>
    </alternativeName>
</protein>